<gene>
    <name evidence="1" type="primary">SPB4</name>
    <name type="ordered locus">ECU10_0690</name>
</gene>
<evidence type="ECO:0000250" key="1">
    <source>
        <dbReference type="UniProtKB" id="P25808"/>
    </source>
</evidence>
<evidence type="ECO:0000255" key="2">
    <source>
        <dbReference type="PROSITE-ProRule" id="PRU00541"/>
    </source>
</evidence>
<evidence type="ECO:0000255" key="3">
    <source>
        <dbReference type="PROSITE-ProRule" id="PRU00542"/>
    </source>
</evidence>
<evidence type="ECO:0000256" key="4">
    <source>
        <dbReference type="SAM" id="MobiDB-lite"/>
    </source>
</evidence>
<evidence type="ECO:0000305" key="5"/>
<proteinExistence type="inferred from homology"/>
<keyword id="KW-0067">ATP-binding</keyword>
<keyword id="KW-0347">Helicase</keyword>
<keyword id="KW-0378">Hydrolase</keyword>
<keyword id="KW-0547">Nucleotide-binding</keyword>
<keyword id="KW-0539">Nucleus</keyword>
<keyword id="KW-1185">Reference proteome</keyword>
<keyword id="KW-0690">Ribosome biogenesis</keyword>
<keyword id="KW-0694">RNA-binding</keyword>
<keyword id="KW-0698">rRNA processing</keyword>
<protein>
    <recommendedName>
        <fullName evidence="5">ATP-dependent rRNA helicase SPB4</fullName>
        <ecNumber evidence="1">3.6.4.13</ecNumber>
    </recommendedName>
</protein>
<comment type="function">
    <text evidence="1">ATP-binding RNA helicase involved in the biogenesis of 60S ribosomal subunits. Binds 90S pre-ribosomal particles and dissociates from pre-60S ribosomal particles after processing of 27SB pre-rRNA. Required for the normal formation of 18S rRNA through the processing of pre-rRNAs at sites A0, A1 and A2, and the normal formation of 25S and 5.8S rRNAs through the processing of pre-rRNAs at sites C1 and C2.</text>
</comment>
<comment type="catalytic activity">
    <reaction evidence="1">
        <text>ATP + H2O = ADP + phosphate + H(+)</text>
        <dbReference type="Rhea" id="RHEA:13065"/>
        <dbReference type="ChEBI" id="CHEBI:15377"/>
        <dbReference type="ChEBI" id="CHEBI:15378"/>
        <dbReference type="ChEBI" id="CHEBI:30616"/>
        <dbReference type="ChEBI" id="CHEBI:43474"/>
        <dbReference type="ChEBI" id="CHEBI:456216"/>
        <dbReference type="EC" id="3.6.4.13"/>
    </reaction>
</comment>
<comment type="subunit">
    <text evidence="1">Component of pre-60S ribosomal complexes.</text>
</comment>
<comment type="subcellular location">
    <subcellularLocation>
        <location evidence="1">Nucleus</location>
        <location evidence="1">Nucleolus</location>
    </subcellularLocation>
</comment>
<comment type="domain">
    <text>The Q motif is unique to and characteristic of the DEAD box family of RNA helicases and controls ATP binding and hydrolysis.</text>
</comment>
<comment type="similarity">
    <text evidence="5">Belongs to the DEAD box helicase family. DDX55/SPB4 subfamily.</text>
</comment>
<reference key="1">
    <citation type="journal article" date="2001" name="Nature">
        <title>Genome sequence and gene compaction of the eukaryote parasite Encephalitozoon cuniculi.</title>
        <authorList>
            <person name="Katinka M.D."/>
            <person name="Duprat S."/>
            <person name="Cornillot E."/>
            <person name="Metenier G."/>
            <person name="Thomarat F."/>
            <person name="Prensier G."/>
            <person name="Barbe V."/>
            <person name="Peyretaillade E."/>
            <person name="Brottier P."/>
            <person name="Wincker P."/>
            <person name="Delbac F."/>
            <person name="El Alaoui H."/>
            <person name="Peyret P."/>
            <person name="Saurin W."/>
            <person name="Gouy M."/>
            <person name="Weissenbach J."/>
            <person name="Vivares C.P."/>
        </authorList>
    </citation>
    <scope>NUCLEOTIDE SEQUENCE [LARGE SCALE GENOMIC DNA]</scope>
    <source>
        <strain>GB-M1</strain>
    </source>
</reference>
<accession>Q8SR49</accession>
<sequence>MGCKGIEDVAMNGRLKKEIEENGFGKMTEVQLKCIPEVLKGKDVVVQSPTGTGKTMAFLAPILSCIYDGKGRGRPGVTAVVITPTRELALQIREVAGLFDVKCECFIGGMSIEEDYKRMKEEFSIAVGTPGRLLEIVGKETKKFSSLSHLVLDEADKLLGFGFEEKLMQLLAKLPRNRVTGLFSATRNDSVDKLSRVFLRNPVSINVGNNEMPVALEYIVVSPMEKLLVLMDIVTGRRCIVFFATCSEVDFFSGLVSRAGFGNICKIHGKISQDERNRVYEEFFQRDGLLFCTDVAARGIDFRGVDLVVHFDVPKEYSSIVHRSGRTARNGSKGESVLFVMPNERAYVEFLKLKGIPAVESSYRMKSSLSYQDIKSMISPELLGLSVKAFVSYIRSYKEHFVSYILDYKGLDFDSLAELFFLERIPGMAELRNVKFEKFTKPARDGKKRALPKKKYRKKRAIK</sequence>
<feature type="chain" id="PRO_0000256047" description="ATP-dependent rRNA helicase SPB4">
    <location>
        <begin position="1"/>
        <end position="463"/>
    </location>
</feature>
<feature type="domain" description="Helicase ATP-binding" evidence="2">
    <location>
        <begin position="35"/>
        <end position="205"/>
    </location>
</feature>
<feature type="domain" description="Helicase C-terminal" evidence="3">
    <location>
        <begin position="226"/>
        <end position="382"/>
    </location>
</feature>
<feature type="region of interest" description="Disordered" evidence="4">
    <location>
        <begin position="444"/>
        <end position="463"/>
    </location>
</feature>
<feature type="short sequence motif" description="Q motif" evidence="5">
    <location>
        <begin position="4"/>
        <end position="32"/>
    </location>
</feature>
<feature type="short sequence motif" description="DEAD box" evidence="5">
    <location>
        <begin position="153"/>
        <end position="156"/>
    </location>
</feature>
<feature type="compositionally biased region" description="Basic residues" evidence="4">
    <location>
        <begin position="446"/>
        <end position="463"/>
    </location>
</feature>
<feature type="binding site" evidence="2">
    <location>
        <begin position="48"/>
        <end position="55"/>
    </location>
    <ligand>
        <name>ATP</name>
        <dbReference type="ChEBI" id="CHEBI:30616"/>
    </ligand>
</feature>
<name>SPB4_ENCCU</name>
<organism>
    <name type="scientific">Encephalitozoon cuniculi (strain GB-M1)</name>
    <name type="common">Microsporidian parasite</name>
    <dbReference type="NCBI Taxonomy" id="284813"/>
    <lineage>
        <taxon>Eukaryota</taxon>
        <taxon>Fungi</taxon>
        <taxon>Fungi incertae sedis</taxon>
        <taxon>Microsporidia</taxon>
        <taxon>Unikaryonidae</taxon>
        <taxon>Encephalitozoon</taxon>
    </lineage>
</organism>
<dbReference type="EC" id="3.6.4.13" evidence="1"/>
<dbReference type="EMBL" id="AL590449">
    <property type="protein sequence ID" value="CAD25788.1"/>
    <property type="molecule type" value="Genomic_DNA"/>
</dbReference>
<dbReference type="RefSeq" id="NP_586184.1">
    <property type="nucleotide sequence ID" value="NM_001042017.1"/>
</dbReference>
<dbReference type="SMR" id="Q8SR49"/>
<dbReference type="STRING" id="284813.Q8SR49"/>
<dbReference type="GeneID" id="859833"/>
<dbReference type="KEGG" id="ecu:ECU10_0690"/>
<dbReference type="VEuPathDB" id="MicrosporidiaDB:ECU10_0690"/>
<dbReference type="HOGENOM" id="CLU_003041_1_3_1"/>
<dbReference type="InParanoid" id="Q8SR49"/>
<dbReference type="OMA" id="MPNEKEY"/>
<dbReference type="OrthoDB" id="7396459at2759"/>
<dbReference type="Proteomes" id="UP000000819">
    <property type="component" value="Chromosome X"/>
</dbReference>
<dbReference type="GO" id="GO:0005730">
    <property type="term" value="C:nucleolus"/>
    <property type="evidence" value="ECO:0007669"/>
    <property type="project" value="UniProtKB-SubCell"/>
</dbReference>
<dbReference type="GO" id="GO:0005524">
    <property type="term" value="F:ATP binding"/>
    <property type="evidence" value="ECO:0007669"/>
    <property type="project" value="UniProtKB-KW"/>
</dbReference>
<dbReference type="GO" id="GO:0016887">
    <property type="term" value="F:ATP hydrolysis activity"/>
    <property type="evidence" value="ECO:0007669"/>
    <property type="project" value="RHEA"/>
</dbReference>
<dbReference type="GO" id="GO:0003723">
    <property type="term" value="F:RNA binding"/>
    <property type="evidence" value="ECO:0007669"/>
    <property type="project" value="UniProtKB-KW"/>
</dbReference>
<dbReference type="GO" id="GO:0003724">
    <property type="term" value="F:RNA helicase activity"/>
    <property type="evidence" value="ECO:0007669"/>
    <property type="project" value="UniProtKB-EC"/>
</dbReference>
<dbReference type="GO" id="GO:0006364">
    <property type="term" value="P:rRNA processing"/>
    <property type="evidence" value="ECO:0007669"/>
    <property type="project" value="UniProtKB-KW"/>
</dbReference>
<dbReference type="CDD" id="cd17960">
    <property type="entry name" value="DEADc_DDX55"/>
    <property type="match status" value="1"/>
</dbReference>
<dbReference type="CDD" id="cd18787">
    <property type="entry name" value="SF2_C_DEAD"/>
    <property type="match status" value="1"/>
</dbReference>
<dbReference type="Gene3D" id="3.40.50.300">
    <property type="entry name" value="P-loop containing nucleotide triphosphate hydrolases"/>
    <property type="match status" value="2"/>
</dbReference>
<dbReference type="InterPro" id="IPR011545">
    <property type="entry name" value="DEAD/DEAH_box_helicase_dom"/>
</dbReference>
<dbReference type="InterPro" id="IPR014001">
    <property type="entry name" value="Helicase_ATP-bd"/>
</dbReference>
<dbReference type="InterPro" id="IPR001650">
    <property type="entry name" value="Helicase_C-like"/>
</dbReference>
<dbReference type="InterPro" id="IPR027417">
    <property type="entry name" value="P-loop_NTPase"/>
</dbReference>
<dbReference type="InterPro" id="IPR000629">
    <property type="entry name" value="RNA-helicase_DEAD-box_CS"/>
</dbReference>
<dbReference type="InterPro" id="IPR025313">
    <property type="entry name" value="SPB4-like_CTE"/>
</dbReference>
<dbReference type="PANTHER" id="PTHR24031">
    <property type="entry name" value="RNA HELICASE"/>
    <property type="match status" value="1"/>
</dbReference>
<dbReference type="Pfam" id="PF13959">
    <property type="entry name" value="CTE_SPB4"/>
    <property type="match status" value="1"/>
</dbReference>
<dbReference type="Pfam" id="PF00270">
    <property type="entry name" value="DEAD"/>
    <property type="match status" value="1"/>
</dbReference>
<dbReference type="Pfam" id="PF00271">
    <property type="entry name" value="Helicase_C"/>
    <property type="match status" value="1"/>
</dbReference>
<dbReference type="SMART" id="SM00487">
    <property type="entry name" value="DEXDc"/>
    <property type="match status" value="1"/>
</dbReference>
<dbReference type="SMART" id="SM01178">
    <property type="entry name" value="DUF4217"/>
    <property type="match status" value="1"/>
</dbReference>
<dbReference type="SMART" id="SM00490">
    <property type="entry name" value="HELICc"/>
    <property type="match status" value="1"/>
</dbReference>
<dbReference type="SUPFAM" id="SSF52540">
    <property type="entry name" value="P-loop containing nucleoside triphosphate hydrolases"/>
    <property type="match status" value="1"/>
</dbReference>
<dbReference type="PROSITE" id="PS00039">
    <property type="entry name" value="DEAD_ATP_HELICASE"/>
    <property type="match status" value="1"/>
</dbReference>
<dbReference type="PROSITE" id="PS51192">
    <property type="entry name" value="HELICASE_ATP_BIND_1"/>
    <property type="match status" value="1"/>
</dbReference>
<dbReference type="PROSITE" id="PS51194">
    <property type="entry name" value="HELICASE_CTER"/>
    <property type="match status" value="1"/>
</dbReference>
<dbReference type="PROSITE" id="PS51195">
    <property type="entry name" value="Q_MOTIF"/>
    <property type="match status" value="1"/>
</dbReference>